<sequence length="110" mass="11884">MTQGVEFNRLMMDMRAMKAEAMSTPKTTAAPELAPGQSSFADMLGQAIGKVHETQQASSQLANAFEIGKSGVDLTDVMIASQKASVSFQALTQVRNKLVQAYQDIMQMPV</sequence>
<name>FLIE_PSEE4</name>
<organism>
    <name type="scientific">Pseudomonas entomophila (strain L48)</name>
    <dbReference type="NCBI Taxonomy" id="384676"/>
    <lineage>
        <taxon>Bacteria</taxon>
        <taxon>Pseudomonadati</taxon>
        <taxon>Pseudomonadota</taxon>
        <taxon>Gammaproteobacteria</taxon>
        <taxon>Pseudomonadales</taxon>
        <taxon>Pseudomonadaceae</taxon>
        <taxon>Pseudomonas</taxon>
    </lineage>
</organism>
<gene>
    <name evidence="1" type="primary">fliE</name>
    <name type="ordered locus">PSEEN3817</name>
</gene>
<evidence type="ECO:0000255" key="1">
    <source>
        <dbReference type="HAMAP-Rule" id="MF_00724"/>
    </source>
</evidence>
<feature type="chain" id="PRO_1000045866" description="Flagellar hook-basal body complex protein FliE">
    <location>
        <begin position="1"/>
        <end position="110"/>
    </location>
</feature>
<dbReference type="EMBL" id="CT573326">
    <property type="protein sequence ID" value="CAK16533.1"/>
    <property type="molecule type" value="Genomic_DNA"/>
</dbReference>
<dbReference type="RefSeq" id="WP_011534910.1">
    <property type="nucleotide sequence ID" value="NC_008027.1"/>
</dbReference>
<dbReference type="SMR" id="Q1I749"/>
<dbReference type="STRING" id="384676.PSEEN3817"/>
<dbReference type="GeneID" id="32806856"/>
<dbReference type="KEGG" id="pen:PSEEN3817"/>
<dbReference type="eggNOG" id="COG1677">
    <property type="taxonomic scope" value="Bacteria"/>
</dbReference>
<dbReference type="HOGENOM" id="CLU_147249_0_0_6"/>
<dbReference type="OrthoDB" id="8909229at2"/>
<dbReference type="Proteomes" id="UP000000658">
    <property type="component" value="Chromosome"/>
</dbReference>
<dbReference type="GO" id="GO:0009425">
    <property type="term" value="C:bacterial-type flagellum basal body"/>
    <property type="evidence" value="ECO:0007669"/>
    <property type="project" value="UniProtKB-SubCell"/>
</dbReference>
<dbReference type="GO" id="GO:0003774">
    <property type="term" value="F:cytoskeletal motor activity"/>
    <property type="evidence" value="ECO:0007669"/>
    <property type="project" value="InterPro"/>
</dbReference>
<dbReference type="GO" id="GO:0005198">
    <property type="term" value="F:structural molecule activity"/>
    <property type="evidence" value="ECO:0007669"/>
    <property type="project" value="InterPro"/>
</dbReference>
<dbReference type="GO" id="GO:0071973">
    <property type="term" value="P:bacterial-type flagellum-dependent cell motility"/>
    <property type="evidence" value="ECO:0007669"/>
    <property type="project" value="InterPro"/>
</dbReference>
<dbReference type="HAMAP" id="MF_00724">
    <property type="entry name" value="FliE"/>
    <property type="match status" value="1"/>
</dbReference>
<dbReference type="InterPro" id="IPR001624">
    <property type="entry name" value="FliE"/>
</dbReference>
<dbReference type="NCBIfam" id="TIGR00205">
    <property type="entry name" value="fliE"/>
    <property type="match status" value="1"/>
</dbReference>
<dbReference type="PANTHER" id="PTHR34653">
    <property type="match status" value="1"/>
</dbReference>
<dbReference type="PANTHER" id="PTHR34653:SF1">
    <property type="entry name" value="FLAGELLAR HOOK-BASAL BODY COMPLEX PROTEIN FLIE"/>
    <property type="match status" value="1"/>
</dbReference>
<dbReference type="Pfam" id="PF02049">
    <property type="entry name" value="FliE"/>
    <property type="match status" value="1"/>
</dbReference>
<dbReference type="PRINTS" id="PR01006">
    <property type="entry name" value="FLGHOOKFLIE"/>
</dbReference>
<comment type="subcellular location">
    <subcellularLocation>
        <location evidence="1">Bacterial flagellum basal body</location>
    </subcellularLocation>
</comment>
<comment type="similarity">
    <text evidence="1">Belongs to the FliE family.</text>
</comment>
<reference key="1">
    <citation type="journal article" date="2006" name="Nat. Biotechnol.">
        <title>Complete genome sequence of the entomopathogenic and metabolically versatile soil bacterium Pseudomonas entomophila.</title>
        <authorList>
            <person name="Vodovar N."/>
            <person name="Vallenet D."/>
            <person name="Cruveiller S."/>
            <person name="Rouy Z."/>
            <person name="Barbe V."/>
            <person name="Acosta C."/>
            <person name="Cattolico L."/>
            <person name="Jubin C."/>
            <person name="Lajus A."/>
            <person name="Segurens B."/>
            <person name="Vacherie B."/>
            <person name="Wincker P."/>
            <person name="Weissenbach J."/>
            <person name="Lemaitre B."/>
            <person name="Medigue C."/>
            <person name="Boccard F."/>
        </authorList>
    </citation>
    <scope>NUCLEOTIDE SEQUENCE [LARGE SCALE GENOMIC DNA]</scope>
    <source>
        <strain>L48</strain>
    </source>
</reference>
<accession>Q1I749</accession>
<keyword id="KW-0975">Bacterial flagellum</keyword>
<proteinExistence type="inferred from homology"/>
<protein>
    <recommendedName>
        <fullName evidence="1">Flagellar hook-basal body complex protein FliE</fullName>
    </recommendedName>
</protein>